<sequence>MLKDKKVIILGDRDGIPGQAIEACIKSAGAHVLFSTTECFVUTSAGAMDLENQKRIKGFAEEFGAENILIVLGGAEAEASGLACETVTNGDPTFAGPLAGVQLGLSCYHVVEPEIKNNVDADVYDEQIGMMEMVLDVDAIIAEIKGYREQFGKYVLAEAEV</sequence>
<keyword id="KW-0560">Oxidoreductase</keyword>
<keyword id="KW-1185">Reference proteome</keyword>
<keyword id="KW-0712">Selenocysteine</keyword>
<protein>
    <recommendedName>
        <fullName>Glycine/sarcosine/betaine reductase complex component A2</fullName>
        <ecNumber>1.21.4.2</ecNumber>
        <ecNumber>1.21.4.3</ecNumber>
        <ecNumber>1.21.4.4</ecNumber>
    </recommendedName>
    <alternativeName>
        <fullName>Selenoprotein PA 2</fullName>
    </alternativeName>
    <alternativeName>
        <fullName>Thioredoxin reductase complex selenoprotein A 2</fullName>
    </alternativeName>
</protein>
<accession>Q6LH19</accession>
<evidence type="ECO:0000250" key="1"/>
<evidence type="ECO:0000305" key="2"/>
<organism>
    <name type="scientific">Photobacterium profundum (strain SS9)</name>
    <dbReference type="NCBI Taxonomy" id="298386"/>
    <lineage>
        <taxon>Bacteria</taxon>
        <taxon>Pseudomonadati</taxon>
        <taxon>Pseudomonadota</taxon>
        <taxon>Gammaproteobacteria</taxon>
        <taxon>Vibrionales</taxon>
        <taxon>Vibrionaceae</taxon>
        <taxon>Photobacterium</taxon>
    </lineage>
</organism>
<comment type="function">
    <text evidence="1">In the first step of glycine, betaine and sarcosine reductases, the substrate is bound to component PB via a Schiff base intermediate. Then the PB-activated substrate is nucleophilically attacked by the selenol anion of component PA to transform it to a carboxymethylated selenoether and the respective amine. By action of component PC, acetyl phosphate is formed, leaving component PA in its oxidized state. Finally component PA becomes reduced by the thioredoxin system to start a new catalytic cycle of reductive deamination (By similarity).</text>
</comment>
<comment type="catalytic activity">
    <reaction>
        <text>acetyl phosphate + [thioredoxin]-disulfide + NH4(+) + H2O = [thioredoxin]-dithiol + glycine + phosphate + H(+)</text>
        <dbReference type="Rhea" id="RHEA:12232"/>
        <dbReference type="Rhea" id="RHEA-COMP:10698"/>
        <dbReference type="Rhea" id="RHEA-COMP:10700"/>
        <dbReference type="ChEBI" id="CHEBI:15377"/>
        <dbReference type="ChEBI" id="CHEBI:15378"/>
        <dbReference type="ChEBI" id="CHEBI:22191"/>
        <dbReference type="ChEBI" id="CHEBI:28938"/>
        <dbReference type="ChEBI" id="CHEBI:29950"/>
        <dbReference type="ChEBI" id="CHEBI:43474"/>
        <dbReference type="ChEBI" id="CHEBI:50058"/>
        <dbReference type="ChEBI" id="CHEBI:57305"/>
        <dbReference type="EC" id="1.21.4.2"/>
    </reaction>
</comment>
<comment type="catalytic activity">
    <reaction>
        <text>acetyl phosphate + methylamine + [thioredoxin]-disulfide + H2O = sarcosine + [thioredoxin]-dithiol + phosphate + H(+)</text>
        <dbReference type="Rhea" id="RHEA:12825"/>
        <dbReference type="Rhea" id="RHEA-COMP:10698"/>
        <dbReference type="Rhea" id="RHEA-COMP:10700"/>
        <dbReference type="ChEBI" id="CHEBI:15377"/>
        <dbReference type="ChEBI" id="CHEBI:15378"/>
        <dbReference type="ChEBI" id="CHEBI:22191"/>
        <dbReference type="ChEBI" id="CHEBI:29950"/>
        <dbReference type="ChEBI" id="CHEBI:43474"/>
        <dbReference type="ChEBI" id="CHEBI:50058"/>
        <dbReference type="ChEBI" id="CHEBI:57433"/>
        <dbReference type="ChEBI" id="CHEBI:59338"/>
        <dbReference type="EC" id="1.21.4.3"/>
    </reaction>
</comment>
<comment type="catalytic activity">
    <reaction>
        <text>acetyl phosphate + trimethylamine + [thioredoxin]-disulfide + H2O = glycine betaine + [thioredoxin]-dithiol + phosphate + H(+)</text>
        <dbReference type="Rhea" id="RHEA:11848"/>
        <dbReference type="Rhea" id="RHEA-COMP:10698"/>
        <dbReference type="Rhea" id="RHEA-COMP:10700"/>
        <dbReference type="ChEBI" id="CHEBI:15377"/>
        <dbReference type="ChEBI" id="CHEBI:15378"/>
        <dbReference type="ChEBI" id="CHEBI:17750"/>
        <dbReference type="ChEBI" id="CHEBI:22191"/>
        <dbReference type="ChEBI" id="CHEBI:29950"/>
        <dbReference type="ChEBI" id="CHEBI:43474"/>
        <dbReference type="ChEBI" id="CHEBI:50058"/>
        <dbReference type="ChEBI" id="CHEBI:58389"/>
        <dbReference type="EC" id="1.21.4.4"/>
    </reaction>
</comment>
<comment type="subunit">
    <text evidence="1">Monomer. Component of the glycine, sarcosine and betaine reductase complexes, together with components B and C (By similarity).</text>
</comment>
<comment type="similarity">
    <text evidence="2">Belongs to the GrdA family.</text>
</comment>
<comment type="sequence caution" evidence="2">
    <conflict type="erroneous termination">
        <sequence resource="EMBL-CDS" id="CAG23411"/>
    </conflict>
    <text>Truncated C-terminus.</text>
</comment>
<reference key="1">
    <citation type="journal article" date="2005" name="Science">
        <title>Life at depth: Photobacterium profundum genome sequence and expression analysis.</title>
        <authorList>
            <person name="Vezzi A."/>
            <person name="Campanaro S."/>
            <person name="D'Angelo M."/>
            <person name="Simonato F."/>
            <person name="Vitulo N."/>
            <person name="Lauro F.M."/>
            <person name="Cestaro A."/>
            <person name="Malacrida G."/>
            <person name="Simionati B."/>
            <person name="Cannata N."/>
            <person name="Romualdi C."/>
            <person name="Bartlett D.H."/>
            <person name="Valle G."/>
        </authorList>
    </citation>
    <scope>NUCLEOTIDE SEQUENCE [LARGE SCALE GENOMIC DNA]</scope>
    <source>
        <strain>ATCC BAA-1253 / SS9</strain>
    </source>
</reference>
<dbReference type="EC" id="1.21.4.2"/>
<dbReference type="EC" id="1.21.4.3"/>
<dbReference type="EC" id="1.21.4.4"/>
<dbReference type="EMBL" id="CR378679">
    <property type="protein sequence ID" value="CAG23411.1"/>
    <property type="status" value="ALT_SEQ"/>
    <property type="molecule type" value="Genomic_DNA"/>
</dbReference>
<dbReference type="STRING" id="298386.PBPRB1549"/>
<dbReference type="KEGG" id="ppr:PBPRB1549"/>
<dbReference type="eggNOG" id="ENOG50313TT">
    <property type="taxonomic scope" value="Bacteria"/>
</dbReference>
<dbReference type="HOGENOM" id="CLU_142275_0_0_6"/>
<dbReference type="Proteomes" id="UP000000593">
    <property type="component" value="Chromosome 2"/>
</dbReference>
<dbReference type="GO" id="GO:0030700">
    <property type="term" value="C:glycine reductase complex"/>
    <property type="evidence" value="ECO:0007669"/>
    <property type="project" value="InterPro"/>
</dbReference>
<dbReference type="GO" id="GO:0033795">
    <property type="term" value="F:betaine reductase activity"/>
    <property type="evidence" value="ECO:0007669"/>
    <property type="project" value="UniProtKB-EC"/>
</dbReference>
<dbReference type="GO" id="GO:0030699">
    <property type="term" value="F:glycine reductase activity"/>
    <property type="evidence" value="ECO:0007669"/>
    <property type="project" value="UniProtKB-UniRule"/>
</dbReference>
<dbReference type="GO" id="GO:0033794">
    <property type="term" value="F:sarcosine reductase activity"/>
    <property type="evidence" value="ECO:0007669"/>
    <property type="project" value="UniProtKB-EC"/>
</dbReference>
<dbReference type="HAMAP" id="MF_00826">
    <property type="entry name" value="GRDA"/>
    <property type="match status" value="1"/>
</dbReference>
<dbReference type="InterPro" id="IPR006812">
    <property type="entry name" value="GRDA"/>
</dbReference>
<dbReference type="NCBIfam" id="NF040748">
    <property type="entry name" value="reduct_selen_A"/>
    <property type="match status" value="1"/>
</dbReference>
<dbReference type="Pfam" id="PF04723">
    <property type="entry name" value="GRDA"/>
    <property type="match status" value="1"/>
</dbReference>
<dbReference type="PIRSF" id="PIRSF000181">
    <property type="entry name" value="Grc_selenoprot_A"/>
    <property type="match status" value="1"/>
</dbReference>
<proteinExistence type="inferred from homology"/>
<feature type="chain" id="PRO_0000249762" description="Glycine/sarcosine/betaine reductase complex component A2">
    <location>
        <begin position="1"/>
        <end position="161"/>
    </location>
</feature>
<feature type="active site" evidence="1">
    <location>
        <position position="42"/>
    </location>
</feature>
<feature type="non-standard amino acid" description="Selenocysteine" evidence="2">
    <location>
        <position position="42"/>
    </location>
</feature>
<gene>
    <name type="primary">grdA2</name>
    <name type="ordered locus">PBPRB1549</name>
</gene>
<name>GRDA2_PHOPR</name>